<accession>A4XP02</accession>
<comment type="similarity">
    <text evidence="1">Belongs to the UPF0178 family.</text>
</comment>
<dbReference type="EMBL" id="CP000680">
    <property type="protein sequence ID" value="ABP83068.1"/>
    <property type="molecule type" value="Genomic_DNA"/>
</dbReference>
<dbReference type="SMR" id="A4XP02"/>
<dbReference type="STRING" id="399739.Pmen_0294"/>
<dbReference type="KEGG" id="pmy:Pmen_0294"/>
<dbReference type="eggNOG" id="COG1671">
    <property type="taxonomic scope" value="Bacteria"/>
</dbReference>
<dbReference type="HOGENOM" id="CLU_106619_2_1_6"/>
<dbReference type="OrthoDB" id="9798918at2"/>
<dbReference type="CDD" id="cd18720">
    <property type="entry name" value="PIN_YqxD-like"/>
    <property type="match status" value="1"/>
</dbReference>
<dbReference type="HAMAP" id="MF_00489">
    <property type="entry name" value="UPF0178"/>
    <property type="match status" value="1"/>
</dbReference>
<dbReference type="InterPro" id="IPR003791">
    <property type="entry name" value="UPF0178"/>
</dbReference>
<dbReference type="NCBIfam" id="NF001095">
    <property type="entry name" value="PRK00124.1"/>
    <property type="match status" value="1"/>
</dbReference>
<dbReference type="PANTHER" id="PTHR35146">
    <property type="entry name" value="UPF0178 PROTEIN YAII"/>
    <property type="match status" value="1"/>
</dbReference>
<dbReference type="PANTHER" id="PTHR35146:SF1">
    <property type="entry name" value="UPF0178 PROTEIN YAII"/>
    <property type="match status" value="1"/>
</dbReference>
<dbReference type="Pfam" id="PF02639">
    <property type="entry name" value="DUF188"/>
    <property type="match status" value="1"/>
</dbReference>
<evidence type="ECO:0000255" key="1">
    <source>
        <dbReference type="HAMAP-Rule" id="MF_00489"/>
    </source>
</evidence>
<sequence length="149" mass="16317">MRVWIDADACPRAARDQVVKFALKRGFEVVLVAGQAVARPNFACVKLIVVPSGPDAADDHLVEHAVPGELVICSDVPLADRLVKKGVAALDPRGREFDERNMGERLAVRNLFTDLREQGQVGGGQAPYSEKDRQAFANALDRILTRLSR</sequence>
<protein>
    <recommendedName>
        <fullName evidence="1">UPF0178 protein Pmen_0294</fullName>
    </recommendedName>
</protein>
<reference key="1">
    <citation type="submission" date="2007-04" db="EMBL/GenBank/DDBJ databases">
        <title>Complete sequence of Pseudomonas mendocina ymp.</title>
        <authorList>
            <consortium name="US DOE Joint Genome Institute"/>
            <person name="Copeland A."/>
            <person name="Lucas S."/>
            <person name="Lapidus A."/>
            <person name="Barry K."/>
            <person name="Glavina del Rio T."/>
            <person name="Dalin E."/>
            <person name="Tice H."/>
            <person name="Pitluck S."/>
            <person name="Kiss H."/>
            <person name="Brettin T."/>
            <person name="Detter J.C."/>
            <person name="Bruce D."/>
            <person name="Han C."/>
            <person name="Schmutz J."/>
            <person name="Larimer F."/>
            <person name="Land M."/>
            <person name="Hauser L."/>
            <person name="Kyrpides N."/>
            <person name="Mikhailova N."/>
            <person name="Hersman L."/>
            <person name="Dubois J."/>
            <person name="Maurice P."/>
            <person name="Richardson P."/>
        </authorList>
    </citation>
    <scope>NUCLEOTIDE SEQUENCE [LARGE SCALE GENOMIC DNA]</scope>
    <source>
        <strain>ymp</strain>
    </source>
</reference>
<proteinExistence type="inferred from homology"/>
<name>Y294_ECTM1</name>
<gene>
    <name type="ordered locus">Pmen_0294</name>
</gene>
<feature type="chain" id="PRO_1000060450" description="UPF0178 protein Pmen_0294">
    <location>
        <begin position="1"/>
        <end position="149"/>
    </location>
</feature>
<organism>
    <name type="scientific">Ectopseudomonas mendocina (strain ymp)</name>
    <name type="common">Pseudomonas mendocina</name>
    <dbReference type="NCBI Taxonomy" id="399739"/>
    <lineage>
        <taxon>Bacteria</taxon>
        <taxon>Pseudomonadati</taxon>
        <taxon>Pseudomonadota</taxon>
        <taxon>Gammaproteobacteria</taxon>
        <taxon>Pseudomonadales</taxon>
        <taxon>Pseudomonadaceae</taxon>
        <taxon>Ectopseudomonas</taxon>
    </lineage>
</organism>